<sequence>MKLNISELKCQQHDKLVTIYCCACDAYFCKKCDKEKHSQDDNQEDSLHIRGLVNKDVIIGRDEEDDDDEDDEYDNKIQDILKKSNNLKKSNSIGGNIVENIELKSPMKTDSPYFIRDKNSIQSDIDSKITEKIDLDNLIHEEDDPFTIGINSNNSNSNNLIDVNDLHTPSTPSPLPSPSLSRSSSTNIKPQQQTSPSPSRSSESNSTTNNNNNKNEKKKLKNSSNSELNRKKIYKKEKIIGDSDEEEHILNNGNKNKNNKSKSVYDYDDDDDNDDDNNNNNNNNNNNNNNNNNENDDNSNSKSEGGVFYSSSSETEKEIENVENKIDNKPKPPNKSLPKTPQSNKKKKPENSIMVKNLDSGLVEQIFEEEEEEEEDEDEVGSESGGGGTIFKNPYSNRKNKSGKYKSNSCALEEGEEDDSSIQSQFDGEEKEAVHIVQGIVEGAILFGTNIATGLSGIVAEPIINIVDNQDNKVKGFFKGVGKGLLGAVTSPVKGGSGFLIKTAEGLRNTPATVFHGDHEDLMGFSDADQVKEREASHIFEGIAQGTISLSKNLYLGVTGIVTEPIKGLREDENNKAKGFFKGVGKGLMGAIVKPASGIIEMAGKTAEGIANTPHTIINAIEMKIDEKSNNNNNNNNLDSDSEGETYVNPNEN</sequence>
<keyword id="KW-0472">Membrane</keyword>
<keyword id="KW-0479">Metal-binding</keyword>
<keyword id="KW-1185">Reference proteome</keyword>
<keyword id="KW-0862">Zinc</keyword>
<keyword id="KW-0863">Zinc-finger</keyword>
<dbReference type="EMBL" id="AAFI02000019">
    <property type="protein sequence ID" value="EAL68795.1"/>
    <property type="molecule type" value="Genomic_DNA"/>
</dbReference>
<dbReference type="RefSeq" id="XP_642696.1">
    <property type="nucleotide sequence ID" value="XM_637604.1"/>
</dbReference>
<dbReference type="SMR" id="Q86K84"/>
<dbReference type="FunCoup" id="Q86K84">
    <property type="interactions" value="131"/>
</dbReference>
<dbReference type="PaxDb" id="44689-DDB0304548"/>
<dbReference type="EnsemblProtists" id="EAL68795">
    <property type="protein sequence ID" value="EAL68795"/>
    <property type="gene ID" value="DDB_G0277219"/>
</dbReference>
<dbReference type="GeneID" id="8620886"/>
<dbReference type="KEGG" id="ddi:DDB_G0277219"/>
<dbReference type="dictyBase" id="DDB_G0277219">
    <property type="gene designation" value="vps13l"/>
</dbReference>
<dbReference type="VEuPathDB" id="AmoebaDB:DDB_G0277219"/>
<dbReference type="eggNOG" id="KOG1809">
    <property type="taxonomic scope" value="Eukaryota"/>
</dbReference>
<dbReference type="HOGENOM" id="CLU_420064_0_0_1"/>
<dbReference type="InParanoid" id="Q86K84"/>
<dbReference type="OMA" id="KPENSIM"/>
<dbReference type="PRO" id="PR:Q86K84"/>
<dbReference type="Proteomes" id="UP000002195">
    <property type="component" value="Chromosome 2"/>
</dbReference>
<dbReference type="GO" id="GO:0016020">
    <property type="term" value="C:membrane"/>
    <property type="evidence" value="ECO:0007669"/>
    <property type="project" value="UniProtKB-SubCell"/>
</dbReference>
<dbReference type="GO" id="GO:0008270">
    <property type="term" value="F:zinc ion binding"/>
    <property type="evidence" value="ECO:0007669"/>
    <property type="project" value="UniProtKB-KW"/>
</dbReference>
<dbReference type="CDD" id="cd19799">
    <property type="entry name" value="Bbox2_MYCBP2"/>
    <property type="match status" value="1"/>
</dbReference>
<dbReference type="InterPro" id="IPR026847">
    <property type="entry name" value="VPS13"/>
</dbReference>
<dbReference type="InterPro" id="IPR000315">
    <property type="entry name" value="Znf_B-box"/>
</dbReference>
<dbReference type="PANTHER" id="PTHR16166:SF93">
    <property type="entry name" value="INTERMEMBRANE LIPID TRANSFER PROTEIN VPS13"/>
    <property type="match status" value="1"/>
</dbReference>
<dbReference type="PANTHER" id="PTHR16166">
    <property type="entry name" value="VACUOLAR PROTEIN SORTING-ASSOCIATED PROTEIN VPS13"/>
    <property type="match status" value="1"/>
</dbReference>
<dbReference type="SUPFAM" id="SSF57845">
    <property type="entry name" value="B-box zinc-binding domain"/>
    <property type="match status" value="1"/>
</dbReference>
<dbReference type="PROSITE" id="PS50119">
    <property type="entry name" value="ZF_BBOX"/>
    <property type="match status" value="1"/>
</dbReference>
<reference key="1">
    <citation type="journal article" date="2002" name="Nature">
        <title>Sequence and analysis of chromosome 2 of Dictyostelium discoideum.</title>
        <authorList>
            <person name="Gloeckner G."/>
            <person name="Eichinger L."/>
            <person name="Szafranski K."/>
            <person name="Pachebat J.A."/>
            <person name="Bankier A.T."/>
            <person name="Dear P.H."/>
            <person name="Lehmann R."/>
            <person name="Baumgart C."/>
            <person name="Parra G."/>
            <person name="Abril J.F."/>
            <person name="Guigo R."/>
            <person name="Kumpf K."/>
            <person name="Tunggal B."/>
            <person name="Cox E.C."/>
            <person name="Quail M.A."/>
            <person name="Platzer M."/>
            <person name="Rosenthal A."/>
            <person name="Noegel A.A."/>
        </authorList>
    </citation>
    <scope>NUCLEOTIDE SEQUENCE [LARGE SCALE GENOMIC DNA]</scope>
    <source>
        <strain>AX4</strain>
    </source>
</reference>
<reference key="2">
    <citation type="journal article" date="2005" name="Nature">
        <title>The genome of the social amoeba Dictyostelium discoideum.</title>
        <authorList>
            <person name="Eichinger L."/>
            <person name="Pachebat J.A."/>
            <person name="Gloeckner G."/>
            <person name="Rajandream M.A."/>
            <person name="Sucgang R."/>
            <person name="Berriman M."/>
            <person name="Song J."/>
            <person name="Olsen R."/>
            <person name="Szafranski K."/>
            <person name="Xu Q."/>
            <person name="Tunggal B."/>
            <person name="Kummerfeld S."/>
            <person name="Madera M."/>
            <person name="Konfortov B.A."/>
            <person name="Rivero F."/>
            <person name="Bankier A.T."/>
            <person name="Lehmann R."/>
            <person name="Hamlin N."/>
            <person name="Davies R."/>
            <person name="Gaudet P."/>
            <person name="Fey P."/>
            <person name="Pilcher K."/>
            <person name="Chen G."/>
            <person name="Saunders D."/>
            <person name="Sodergren E.J."/>
            <person name="Davis P."/>
            <person name="Kerhornou A."/>
            <person name="Nie X."/>
            <person name="Hall N."/>
            <person name="Anjard C."/>
            <person name="Hemphill L."/>
            <person name="Bason N."/>
            <person name="Farbrother P."/>
            <person name="Desany B."/>
            <person name="Just E."/>
            <person name="Morio T."/>
            <person name="Rost R."/>
            <person name="Churcher C.M."/>
            <person name="Cooper J."/>
            <person name="Haydock S."/>
            <person name="van Driessche N."/>
            <person name="Cronin A."/>
            <person name="Goodhead I."/>
            <person name="Muzny D.M."/>
            <person name="Mourier T."/>
            <person name="Pain A."/>
            <person name="Lu M."/>
            <person name="Harper D."/>
            <person name="Lindsay R."/>
            <person name="Hauser H."/>
            <person name="James K.D."/>
            <person name="Quiles M."/>
            <person name="Madan Babu M."/>
            <person name="Saito T."/>
            <person name="Buchrieser C."/>
            <person name="Wardroper A."/>
            <person name="Felder M."/>
            <person name="Thangavelu M."/>
            <person name="Johnson D."/>
            <person name="Knights A."/>
            <person name="Loulseged H."/>
            <person name="Mungall K.L."/>
            <person name="Oliver K."/>
            <person name="Price C."/>
            <person name="Quail M.A."/>
            <person name="Urushihara H."/>
            <person name="Hernandez J."/>
            <person name="Rabbinowitsch E."/>
            <person name="Steffen D."/>
            <person name="Sanders M."/>
            <person name="Ma J."/>
            <person name="Kohara Y."/>
            <person name="Sharp S."/>
            <person name="Simmonds M.N."/>
            <person name="Spiegler S."/>
            <person name="Tivey A."/>
            <person name="Sugano S."/>
            <person name="White B."/>
            <person name="Walker D."/>
            <person name="Woodward J.R."/>
            <person name="Winckler T."/>
            <person name="Tanaka Y."/>
            <person name="Shaulsky G."/>
            <person name="Schleicher M."/>
            <person name="Weinstock G.M."/>
            <person name="Rosenthal A."/>
            <person name="Cox E.C."/>
            <person name="Chisholm R.L."/>
            <person name="Gibbs R.A."/>
            <person name="Loomis W.F."/>
            <person name="Platzer M."/>
            <person name="Kay R.R."/>
            <person name="Williams J.G."/>
            <person name="Dear P.H."/>
            <person name="Noegel A.A."/>
            <person name="Barrell B.G."/>
            <person name="Kuspa A."/>
        </authorList>
    </citation>
    <scope>NUCLEOTIDE SEQUENCE [LARGE SCALE GENOMIC DNA]</scope>
    <source>
        <strain>AX4</strain>
    </source>
</reference>
<feature type="chain" id="PRO_0000366145" description="Intermembrane lipid transfer protein vps13l">
    <location>
        <begin position="1"/>
        <end position="653"/>
    </location>
</feature>
<feature type="zinc finger region" description="B box-type" evidence="3">
    <location>
        <begin position="5"/>
        <end position="49"/>
    </location>
</feature>
<feature type="region of interest" description="Disordered" evidence="4">
    <location>
        <begin position="159"/>
        <end position="232"/>
    </location>
</feature>
<feature type="region of interest" description="Disordered" evidence="4">
    <location>
        <begin position="248"/>
        <end position="420"/>
    </location>
</feature>
<feature type="region of interest" description="Disordered" evidence="4">
    <location>
        <begin position="627"/>
        <end position="653"/>
    </location>
</feature>
<feature type="compositionally biased region" description="Low complexity" evidence="4">
    <location>
        <begin position="195"/>
        <end position="213"/>
    </location>
</feature>
<feature type="compositionally biased region" description="Acidic residues" evidence="4">
    <location>
        <begin position="266"/>
        <end position="277"/>
    </location>
</feature>
<feature type="compositionally biased region" description="Low complexity" evidence="4">
    <location>
        <begin position="278"/>
        <end position="293"/>
    </location>
</feature>
<feature type="compositionally biased region" description="Basic and acidic residues" evidence="4">
    <location>
        <begin position="314"/>
        <end position="330"/>
    </location>
</feature>
<feature type="compositionally biased region" description="Acidic residues" evidence="4">
    <location>
        <begin position="366"/>
        <end position="381"/>
    </location>
</feature>
<feature type="binding site" evidence="3">
    <location>
        <position position="10"/>
    </location>
    <ligand>
        <name>Zn(2+)</name>
        <dbReference type="ChEBI" id="CHEBI:29105"/>
    </ligand>
</feature>
<feature type="binding site" evidence="3">
    <location>
        <position position="13"/>
    </location>
    <ligand>
        <name>Zn(2+)</name>
        <dbReference type="ChEBI" id="CHEBI:29105"/>
    </ligand>
</feature>
<feature type="binding site" evidence="3">
    <location>
        <position position="32"/>
    </location>
    <ligand>
        <name>Zn(2+)</name>
        <dbReference type="ChEBI" id="CHEBI:29105"/>
    </ligand>
</feature>
<feature type="binding site" evidence="3">
    <location>
        <position position="37"/>
    </location>
    <ligand>
        <name>Zn(2+)</name>
        <dbReference type="ChEBI" id="CHEBI:29105"/>
    </ligand>
</feature>
<evidence type="ECO:0000250" key="1">
    <source>
        <dbReference type="UniProtKB" id="Q07878"/>
    </source>
</evidence>
<evidence type="ECO:0000250" key="2">
    <source>
        <dbReference type="UniProtKB" id="Q96RL7"/>
    </source>
</evidence>
<evidence type="ECO:0000255" key="3">
    <source>
        <dbReference type="PROSITE-ProRule" id="PRU00024"/>
    </source>
</evidence>
<evidence type="ECO:0000256" key="4">
    <source>
        <dbReference type="SAM" id="MobiDB-lite"/>
    </source>
</evidence>
<evidence type="ECO:0000305" key="5"/>
<protein>
    <recommendedName>
        <fullName evidence="2">Intermembrane lipid transfer protein vps13l</fullName>
    </recommendedName>
    <alternativeName>
        <fullName>Vacuolar protein sorting-associated protein 13-like protein</fullName>
    </alternativeName>
</protein>
<proteinExistence type="inferred from homology"/>
<gene>
    <name type="primary">vps13l</name>
    <name type="ORF">DDB_G0277219</name>
</gene>
<name>VP13L_DICDI</name>
<accession>Q86K84</accession>
<accession>Q550C0</accession>
<organism>
    <name type="scientific">Dictyostelium discoideum</name>
    <name type="common">Social amoeba</name>
    <dbReference type="NCBI Taxonomy" id="44689"/>
    <lineage>
        <taxon>Eukaryota</taxon>
        <taxon>Amoebozoa</taxon>
        <taxon>Evosea</taxon>
        <taxon>Eumycetozoa</taxon>
        <taxon>Dictyostelia</taxon>
        <taxon>Dictyosteliales</taxon>
        <taxon>Dictyosteliaceae</taxon>
        <taxon>Dictyostelium</taxon>
    </lineage>
</organism>
<comment type="function">
    <text evidence="1">Mediates the transfer of lipids between membranes at organelle contact sites.</text>
</comment>
<comment type="subcellular location">
    <subcellularLocation>
        <location evidence="5">Membrane</location>
        <topology evidence="5">Peripheral membrane protein</topology>
    </subcellularLocation>
</comment>
<comment type="similarity">
    <text evidence="5">Belongs to the VPS13 family.</text>
</comment>